<dbReference type="EMBL" id="AP008229">
    <property type="protein sequence ID" value="BAE69168.1"/>
    <property type="molecule type" value="Genomic_DNA"/>
</dbReference>
<dbReference type="RefSeq" id="WP_005914463.1">
    <property type="nucleotide sequence ID" value="NC_007705.1"/>
</dbReference>
<dbReference type="BMRB" id="Q2P2Q9"/>
<dbReference type="SMR" id="Q2P2Q9"/>
<dbReference type="GeneID" id="97510366"/>
<dbReference type="KEGG" id="xom:XOO2413"/>
<dbReference type="HOGENOM" id="CLU_134358_2_1_6"/>
<dbReference type="GO" id="GO:0030163">
    <property type="term" value="P:protein catabolic process"/>
    <property type="evidence" value="ECO:0007669"/>
    <property type="project" value="InterPro"/>
</dbReference>
<dbReference type="GO" id="GO:0006508">
    <property type="term" value="P:proteolysis"/>
    <property type="evidence" value="ECO:0007669"/>
    <property type="project" value="UniProtKB-UniRule"/>
</dbReference>
<dbReference type="FunFam" id="3.30.1390.10:FF:000002">
    <property type="entry name" value="ATP-dependent Clp protease adapter protein ClpS"/>
    <property type="match status" value="1"/>
</dbReference>
<dbReference type="Gene3D" id="3.30.1390.10">
    <property type="match status" value="1"/>
</dbReference>
<dbReference type="HAMAP" id="MF_00302">
    <property type="entry name" value="ClpS"/>
    <property type="match status" value="1"/>
</dbReference>
<dbReference type="InterPro" id="IPR022935">
    <property type="entry name" value="ClpS"/>
</dbReference>
<dbReference type="InterPro" id="IPR003769">
    <property type="entry name" value="ClpS_core"/>
</dbReference>
<dbReference type="InterPro" id="IPR014719">
    <property type="entry name" value="Ribosomal_bL12_C/ClpS-like"/>
</dbReference>
<dbReference type="NCBIfam" id="NF000669">
    <property type="entry name" value="PRK00033.1-2"/>
    <property type="match status" value="1"/>
</dbReference>
<dbReference type="NCBIfam" id="NF000672">
    <property type="entry name" value="PRK00033.1-5"/>
    <property type="match status" value="1"/>
</dbReference>
<dbReference type="PANTHER" id="PTHR33473:SF19">
    <property type="entry name" value="ATP-DEPENDENT CLP PROTEASE ADAPTER PROTEIN CLPS"/>
    <property type="match status" value="1"/>
</dbReference>
<dbReference type="PANTHER" id="PTHR33473">
    <property type="entry name" value="ATP-DEPENDENT CLP PROTEASE ADAPTER PROTEIN CLPS1, CHLOROPLASTIC"/>
    <property type="match status" value="1"/>
</dbReference>
<dbReference type="Pfam" id="PF02617">
    <property type="entry name" value="ClpS"/>
    <property type="match status" value="1"/>
</dbReference>
<dbReference type="SUPFAM" id="SSF54736">
    <property type="entry name" value="ClpS-like"/>
    <property type="match status" value="1"/>
</dbReference>
<protein>
    <recommendedName>
        <fullName evidence="1">ATP-dependent Clp protease adapter protein ClpS</fullName>
    </recommendedName>
</protein>
<gene>
    <name evidence="1" type="primary">clpS</name>
    <name type="ordered locus">XOO2413</name>
</gene>
<evidence type="ECO:0000255" key="1">
    <source>
        <dbReference type="HAMAP-Rule" id="MF_00302"/>
    </source>
</evidence>
<evidence type="ECO:0000256" key="2">
    <source>
        <dbReference type="SAM" id="MobiDB-lite"/>
    </source>
</evidence>
<feature type="chain" id="PRO_0000300733" description="ATP-dependent Clp protease adapter protein ClpS">
    <location>
        <begin position="1"/>
        <end position="106"/>
    </location>
</feature>
<feature type="region of interest" description="Disordered" evidence="2">
    <location>
        <begin position="1"/>
        <end position="20"/>
    </location>
</feature>
<feature type="compositionally biased region" description="Basic and acidic residues" evidence="2">
    <location>
        <begin position="1"/>
        <end position="13"/>
    </location>
</feature>
<proteinExistence type="inferred from homology"/>
<sequence>MPRNTSHEHDHGLMVEASKPEVAPPPRYQVLLLNDDYTPMDFVVTVLEQFFNLNLEQATQIMLHVHTRGRGVCGVYSREVAESKVAQVNEFSRMNQHPLLCTMEQA</sequence>
<organism>
    <name type="scientific">Xanthomonas oryzae pv. oryzae (strain MAFF 311018)</name>
    <dbReference type="NCBI Taxonomy" id="342109"/>
    <lineage>
        <taxon>Bacteria</taxon>
        <taxon>Pseudomonadati</taxon>
        <taxon>Pseudomonadota</taxon>
        <taxon>Gammaproteobacteria</taxon>
        <taxon>Lysobacterales</taxon>
        <taxon>Lysobacteraceae</taxon>
        <taxon>Xanthomonas</taxon>
    </lineage>
</organism>
<reference key="1">
    <citation type="journal article" date="2005" name="Jpn. Agric. Res. Q.">
        <title>Genome sequence of Xanthomonas oryzae pv. oryzae suggests contribution of large numbers of effector genes and insertion sequences to its race diversity.</title>
        <authorList>
            <person name="Ochiai H."/>
            <person name="Inoue Y."/>
            <person name="Takeya M."/>
            <person name="Sasaki A."/>
            <person name="Kaku H."/>
        </authorList>
    </citation>
    <scope>NUCLEOTIDE SEQUENCE [LARGE SCALE GENOMIC DNA]</scope>
    <source>
        <strain>MAFF 311018</strain>
    </source>
</reference>
<accession>Q2P2Q9</accession>
<comment type="function">
    <text evidence="1">Involved in the modulation of the specificity of the ClpAP-mediated ATP-dependent protein degradation.</text>
</comment>
<comment type="subunit">
    <text evidence="1">Binds to the N-terminal domain of the chaperone ClpA.</text>
</comment>
<comment type="similarity">
    <text evidence="1">Belongs to the ClpS family.</text>
</comment>
<name>CLPS_XANOM</name>